<evidence type="ECO:0000255" key="1">
    <source>
        <dbReference type="HAMAP-Rule" id="MF_00558"/>
    </source>
</evidence>
<feature type="chain" id="PRO_1000082013" description="Succinate--CoA ligase [ADP-forming] subunit beta">
    <location>
        <begin position="1"/>
        <end position="386"/>
    </location>
</feature>
<feature type="domain" description="ATP-grasp" evidence="1">
    <location>
        <begin position="9"/>
        <end position="244"/>
    </location>
</feature>
<feature type="binding site" evidence="1">
    <location>
        <position position="46"/>
    </location>
    <ligand>
        <name>ATP</name>
        <dbReference type="ChEBI" id="CHEBI:30616"/>
    </ligand>
</feature>
<feature type="binding site" evidence="1">
    <location>
        <begin position="53"/>
        <end position="55"/>
    </location>
    <ligand>
        <name>ATP</name>
        <dbReference type="ChEBI" id="CHEBI:30616"/>
    </ligand>
</feature>
<feature type="binding site" evidence="1">
    <location>
        <position position="99"/>
    </location>
    <ligand>
        <name>ATP</name>
        <dbReference type="ChEBI" id="CHEBI:30616"/>
    </ligand>
</feature>
<feature type="binding site" evidence="1">
    <location>
        <position position="102"/>
    </location>
    <ligand>
        <name>ATP</name>
        <dbReference type="ChEBI" id="CHEBI:30616"/>
    </ligand>
</feature>
<feature type="binding site" evidence="1">
    <location>
        <position position="107"/>
    </location>
    <ligand>
        <name>ATP</name>
        <dbReference type="ChEBI" id="CHEBI:30616"/>
    </ligand>
</feature>
<feature type="binding site" evidence="1">
    <location>
        <position position="199"/>
    </location>
    <ligand>
        <name>Mg(2+)</name>
        <dbReference type="ChEBI" id="CHEBI:18420"/>
    </ligand>
</feature>
<feature type="binding site" evidence="1">
    <location>
        <position position="213"/>
    </location>
    <ligand>
        <name>Mg(2+)</name>
        <dbReference type="ChEBI" id="CHEBI:18420"/>
    </ligand>
</feature>
<feature type="binding site" evidence="1">
    <location>
        <position position="264"/>
    </location>
    <ligand>
        <name>substrate</name>
        <note>ligand shared with subunit alpha</note>
    </ligand>
</feature>
<feature type="binding site" evidence="1">
    <location>
        <begin position="321"/>
        <end position="323"/>
    </location>
    <ligand>
        <name>substrate</name>
        <note>ligand shared with subunit alpha</note>
    </ligand>
</feature>
<organism>
    <name type="scientific">Bacillus thuringiensis subsp. konkukian (strain 97-27)</name>
    <dbReference type="NCBI Taxonomy" id="281309"/>
    <lineage>
        <taxon>Bacteria</taxon>
        <taxon>Bacillati</taxon>
        <taxon>Bacillota</taxon>
        <taxon>Bacilli</taxon>
        <taxon>Bacillales</taxon>
        <taxon>Bacillaceae</taxon>
        <taxon>Bacillus</taxon>
        <taxon>Bacillus cereus group</taxon>
    </lineage>
</organism>
<gene>
    <name evidence="1" type="primary">sucC</name>
    <name type="ordered locus">BT9727_3577</name>
</gene>
<protein>
    <recommendedName>
        <fullName evidence="1">Succinate--CoA ligase [ADP-forming] subunit beta</fullName>
        <ecNumber evidence="1">6.2.1.5</ecNumber>
    </recommendedName>
    <alternativeName>
        <fullName evidence="1">Succinyl-CoA synthetase subunit beta</fullName>
        <shortName evidence="1">SCS-beta</shortName>
    </alternativeName>
</protein>
<proteinExistence type="inferred from homology"/>
<accession>Q6HEX9</accession>
<sequence>MNIHEYQGKAVLRSYGVSVPNGKVAFTVEEAVEAAKELGTDVCVVKAQIHAGGRGKAGGVKVAKNLDEVRTYAESILGTTLVTHQTGPEGKEVKRLLIEEGCDIKKEYYVGLVLDRATSQVVLMASEEGGTEIEEVAEKTPEKIFKEYIDPAVGLQGFQARRIAFNINIPKELVGQAVKFMMGLYRAFIEKDCSIAEINPLVTTGDGKVMALDAKLNFDSNALYRHKDILELRDLDEEDAKEIEASKYDLNYIPLDGNIGCMVNGAGLAMATMDIIKHYHGDPANFLDVGGGATAEKVTEAFKIILSDKNVKGIFVNIFGGIMKCDVIAEGVIEATKQVGLELPLVVRLEGTNVELGKKILNESGLNIVAAESMADGAQKIVSLVG</sequence>
<keyword id="KW-0067">ATP-binding</keyword>
<keyword id="KW-0436">Ligase</keyword>
<keyword id="KW-0460">Magnesium</keyword>
<keyword id="KW-0479">Metal-binding</keyword>
<keyword id="KW-0547">Nucleotide-binding</keyword>
<keyword id="KW-0816">Tricarboxylic acid cycle</keyword>
<name>SUCC_BACHK</name>
<reference key="1">
    <citation type="journal article" date="2006" name="J. Bacteriol.">
        <title>Pathogenomic sequence analysis of Bacillus cereus and Bacillus thuringiensis isolates closely related to Bacillus anthracis.</title>
        <authorList>
            <person name="Han C.S."/>
            <person name="Xie G."/>
            <person name="Challacombe J.F."/>
            <person name="Altherr M.R."/>
            <person name="Bhotika S.S."/>
            <person name="Bruce D."/>
            <person name="Campbell C.S."/>
            <person name="Campbell M.L."/>
            <person name="Chen J."/>
            <person name="Chertkov O."/>
            <person name="Cleland C."/>
            <person name="Dimitrijevic M."/>
            <person name="Doggett N.A."/>
            <person name="Fawcett J.J."/>
            <person name="Glavina T."/>
            <person name="Goodwin L.A."/>
            <person name="Hill K.K."/>
            <person name="Hitchcock P."/>
            <person name="Jackson P.J."/>
            <person name="Keim P."/>
            <person name="Kewalramani A.R."/>
            <person name="Longmire J."/>
            <person name="Lucas S."/>
            <person name="Malfatti S."/>
            <person name="McMurry K."/>
            <person name="Meincke L.J."/>
            <person name="Misra M."/>
            <person name="Moseman B.L."/>
            <person name="Mundt M."/>
            <person name="Munk A.C."/>
            <person name="Okinaka R.T."/>
            <person name="Parson-Quintana B."/>
            <person name="Reilly L.P."/>
            <person name="Richardson P."/>
            <person name="Robinson D.L."/>
            <person name="Rubin E."/>
            <person name="Saunders E."/>
            <person name="Tapia R."/>
            <person name="Tesmer J.G."/>
            <person name="Thayer N."/>
            <person name="Thompson L.S."/>
            <person name="Tice H."/>
            <person name="Ticknor L.O."/>
            <person name="Wills P.L."/>
            <person name="Brettin T.S."/>
            <person name="Gilna P."/>
        </authorList>
    </citation>
    <scope>NUCLEOTIDE SEQUENCE [LARGE SCALE GENOMIC DNA]</scope>
    <source>
        <strain>97-27</strain>
    </source>
</reference>
<dbReference type="EC" id="6.2.1.5" evidence="1"/>
<dbReference type="EMBL" id="AE017355">
    <property type="protein sequence ID" value="AAT60607.1"/>
    <property type="molecule type" value="Genomic_DNA"/>
</dbReference>
<dbReference type="RefSeq" id="WP_001020785.1">
    <property type="nucleotide sequence ID" value="NC_005957.1"/>
</dbReference>
<dbReference type="RefSeq" id="YP_037897.1">
    <property type="nucleotide sequence ID" value="NC_005957.1"/>
</dbReference>
<dbReference type="SMR" id="Q6HEX9"/>
<dbReference type="GeneID" id="93007276"/>
<dbReference type="KEGG" id="btk:BT9727_3577"/>
<dbReference type="PATRIC" id="fig|281309.8.peg.3815"/>
<dbReference type="HOGENOM" id="CLU_037430_0_2_9"/>
<dbReference type="UniPathway" id="UPA00223">
    <property type="reaction ID" value="UER00999"/>
</dbReference>
<dbReference type="Proteomes" id="UP000001301">
    <property type="component" value="Chromosome"/>
</dbReference>
<dbReference type="GO" id="GO:0005829">
    <property type="term" value="C:cytosol"/>
    <property type="evidence" value="ECO:0007669"/>
    <property type="project" value="TreeGrafter"/>
</dbReference>
<dbReference type="GO" id="GO:0042709">
    <property type="term" value="C:succinate-CoA ligase complex"/>
    <property type="evidence" value="ECO:0007669"/>
    <property type="project" value="TreeGrafter"/>
</dbReference>
<dbReference type="GO" id="GO:0005524">
    <property type="term" value="F:ATP binding"/>
    <property type="evidence" value="ECO:0007669"/>
    <property type="project" value="UniProtKB-UniRule"/>
</dbReference>
<dbReference type="GO" id="GO:0000287">
    <property type="term" value="F:magnesium ion binding"/>
    <property type="evidence" value="ECO:0007669"/>
    <property type="project" value="UniProtKB-UniRule"/>
</dbReference>
<dbReference type="GO" id="GO:0004775">
    <property type="term" value="F:succinate-CoA ligase (ADP-forming) activity"/>
    <property type="evidence" value="ECO:0007669"/>
    <property type="project" value="UniProtKB-UniRule"/>
</dbReference>
<dbReference type="GO" id="GO:0004776">
    <property type="term" value="F:succinate-CoA ligase (GDP-forming) activity"/>
    <property type="evidence" value="ECO:0007669"/>
    <property type="project" value="RHEA"/>
</dbReference>
<dbReference type="GO" id="GO:0006104">
    <property type="term" value="P:succinyl-CoA metabolic process"/>
    <property type="evidence" value="ECO:0007669"/>
    <property type="project" value="TreeGrafter"/>
</dbReference>
<dbReference type="GO" id="GO:0006099">
    <property type="term" value="P:tricarboxylic acid cycle"/>
    <property type="evidence" value="ECO:0007669"/>
    <property type="project" value="UniProtKB-UniRule"/>
</dbReference>
<dbReference type="FunFam" id="3.30.1490.20:FF:000002">
    <property type="entry name" value="Succinate--CoA ligase [ADP-forming] subunit beta"/>
    <property type="match status" value="1"/>
</dbReference>
<dbReference type="FunFam" id="3.30.470.20:FF:000002">
    <property type="entry name" value="Succinate--CoA ligase [ADP-forming] subunit beta"/>
    <property type="match status" value="1"/>
</dbReference>
<dbReference type="FunFam" id="3.40.50.261:FF:000001">
    <property type="entry name" value="Succinate--CoA ligase [ADP-forming] subunit beta"/>
    <property type="match status" value="1"/>
</dbReference>
<dbReference type="Gene3D" id="3.30.1490.20">
    <property type="entry name" value="ATP-grasp fold, A domain"/>
    <property type="match status" value="1"/>
</dbReference>
<dbReference type="Gene3D" id="3.30.470.20">
    <property type="entry name" value="ATP-grasp fold, B domain"/>
    <property type="match status" value="1"/>
</dbReference>
<dbReference type="Gene3D" id="3.40.50.261">
    <property type="entry name" value="Succinyl-CoA synthetase domains"/>
    <property type="match status" value="1"/>
</dbReference>
<dbReference type="HAMAP" id="MF_00558">
    <property type="entry name" value="Succ_CoA_beta"/>
    <property type="match status" value="1"/>
</dbReference>
<dbReference type="InterPro" id="IPR011761">
    <property type="entry name" value="ATP-grasp"/>
</dbReference>
<dbReference type="InterPro" id="IPR013650">
    <property type="entry name" value="ATP-grasp_succ-CoA_synth-type"/>
</dbReference>
<dbReference type="InterPro" id="IPR013815">
    <property type="entry name" value="ATP_grasp_subdomain_1"/>
</dbReference>
<dbReference type="InterPro" id="IPR005811">
    <property type="entry name" value="SUCC_ACL_C"/>
</dbReference>
<dbReference type="InterPro" id="IPR005809">
    <property type="entry name" value="Succ_CoA_ligase-like_bsu"/>
</dbReference>
<dbReference type="InterPro" id="IPR016102">
    <property type="entry name" value="Succinyl-CoA_synth-like"/>
</dbReference>
<dbReference type="NCBIfam" id="NF001913">
    <property type="entry name" value="PRK00696.1"/>
    <property type="match status" value="1"/>
</dbReference>
<dbReference type="NCBIfam" id="TIGR01016">
    <property type="entry name" value="sucCoAbeta"/>
    <property type="match status" value="1"/>
</dbReference>
<dbReference type="PANTHER" id="PTHR11815:SF10">
    <property type="entry name" value="SUCCINATE--COA LIGASE [GDP-FORMING] SUBUNIT BETA, MITOCHONDRIAL"/>
    <property type="match status" value="1"/>
</dbReference>
<dbReference type="PANTHER" id="PTHR11815">
    <property type="entry name" value="SUCCINYL-COA SYNTHETASE BETA CHAIN"/>
    <property type="match status" value="1"/>
</dbReference>
<dbReference type="Pfam" id="PF08442">
    <property type="entry name" value="ATP-grasp_2"/>
    <property type="match status" value="1"/>
</dbReference>
<dbReference type="Pfam" id="PF00549">
    <property type="entry name" value="Ligase_CoA"/>
    <property type="match status" value="1"/>
</dbReference>
<dbReference type="PIRSF" id="PIRSF001554">
    <property type="entry name" value="SucCS_beta"/>
    <property type="match status" value="1"/>
</dbReference>
<dbReference type="SUPFAM" id="SSF56059">
    <property type="entry name" value="Glutathione synthetase ATP-binding domain-like"/>
    <property type="match status" value="1"/>
</dbReference>
<dbReference type="SUPFAM" id="SSF52210">
    <property type="entry name" value="Succinyl-CoA synthetase domains"/>
    <property type="match status" value="1"/>
</dbReference>
<dbReference type="PROSITE" id="PS50975">
    <property type="entry name" value="ATP_GRASP"/>
    <property type="match status" value="1"/>
</dbReference>
<comment type="function">
    <text evidence="1">Succinyl-CoA synthetase functions in the citric acid cycle (TCA), coupling the hydrolysis of succinyl-CoA to the synthesis of either ATP or GTP and thus represents the only step of substrate-level phosphorylation in the TCA. The beta subunit provides nucleotide specificity of the enzyme and binds the substrate succinate, while the binding sites for coenzyme A and phosphate are found in the alpha subunit.</text>
</comment>
<comment type="catalytic activity">
    <reaction evidence="1">
        <text>succinate + ATP + CoA = succinyl-CoA + ADP + phosphate</text>
        <dbReference type="Rhea" id="RHEA:17661"/>
        <dbReference type="ChEBI" id="CHEBI:30031"/>
        <dbReference type="ChEBI" id="CHEBI:30616"/>
        <dbReference type="ChEBI" id="CHEBI:43474"/>
        <dbReference type="ChEBI" id="CHEBI:57287"/>
        <dbReference type="ChEBI" id="CHEBI:57292"/>
        <dbReference type="ChEBI" id="CHEBI:456216"/>
        <dbReference type="EC" id="6.2.1.5"/>
    </reaction>
    <physiologicalReaction direction="right-to-left" evidence="1">
        <dbReference type="Rhea" id="RHEA:17663"/>
    </physiologicalReaction>
</comment>
<comment type="catalytic activity">
    <reaction evidence="1">
        <text>GTP + succinate + CoA = succinyl-CoA + GDP + phosphate</text>
        <dbReference type="Rhea" id="RHEA:22120"/>
        <dbReference type="ChEBI" id="CHEBI:30031"/>
        <dbReference type="ChEBI" id="CHEBI:37565"/>
        <dbReference type="ChEBI" id="CHEBI:43474"/>
        <dbReference type="ChEBI" id="CHEBI:57287"/>
        <dbReference type="ChEBI" id="CHEBI:57292"/>
        <dbReference type="ChEBI" id="CHEBI:58189"/>
    </reaction>
    <physiologicalReaction direction="right-to-left" evidence="1">
        <dbReference type="Rhea" id="RHEA:22122"/>
    </physiologicalReaction>
</comment>
<comment type="cofactor">
    <cofactor evidence="1">
        <name>Mg(2+)</name>
        <dbReference type="ChEBI" id="CHEBI:18420"/>
    </cofactor>
    <text evidence="1">Binds 1 Mg(2+) ion per subunit.</text>
</comment>
<comment type="pathway">
    <text evidence="1">Carbohydrate metabolism; tricarboxylic acid cycle; succinate from succinyl-CoA (ligase route): step 1/1.</text>
</comment>
<comment type="subunit">
    <text evidence="1">Heterotetramer of two alpha and two beta subunits.</text>
</comment>
<comment type="similarity">
    <text evidence="1">Belongs to the succinate/malate CoA ligase beta subunit family.</text>
</comment>